<reference key="1">
    <citation type="journal article" date="1997" name="DNA Cell Biol.">
        <title>Murine thioredoxin peroxidase delays neuronal apoptosis and is expressed in areas of the brain most susceptible to hypoxic and ischemic injury.</title>
        <authorList>
            <person name="Ichimiya S."/>
            <person name="Davis J.G."/>
            <person name="O'Rourke D.M."/>
            <person name="Katsumata M."/>
            <person name="Greene M.I."/>
        </authorList>
    </citation>
    <scope>NUCLEOTIDE SEQUENCE [MRNA]</scope>
    <source>
        <strain>BALB/cJ</strain>
        <tissue>Brain</tissue>
    </source>
</reference>
<reference key="2">
    <citation type="submission" date="1996-09" db="EMBL/GenBank/DDBJ databases">
        <authorList>
            <person name="Oberbaeumer I."/>
        </authorList>
    </citation>
    <scope>NUCLEOTIDE SEQUENCE [MRNA]</scope>
    <source>
        <strain>129</strain>
    </source>
</reference>
<reference key="3">
    <citation type="submission" date="1995-07" db="EMBL/GenBank/DDBJ databases">
        <authorList>
            <person name="Chae H.Z."/>
            <person name="Kim H."/>
            <person name="Rhee S."/>
        </authorList>
    </citation>
    <scope>NUCLEOTIDE SEQUENCE [MRNA]</scope>
    <source>
        <strain>C57BL/6J</strain>
    </source>
</reference>
<reference key="4">
    <citation type="journal article" date="1998" name="Gene">
        <title>The type II peroxiredoxin gene family of the mouse: molecular structure, expression and evolution.</title>
        <authorList>
            <person name="Lim M.J."/>
            <person name="Chae H.Z."/>
            <person name="Rhee S.G."/>
            <person name="Yu D.-Y."/>
            <person name="Lee K.-K."/>
            <person name="Yeom Y.I."/>
        </authorList>
    </citation>
    <scope>NUCLEOTIDE SEQUENCE [GENOMIC DNA / MRNA]</scope>
    <source>
        <strain>129/SvJ</strain>
    </source>
</reference>
<reference key="5">
    <citation type="journal article" date="2005" name="Science">
        <title>The transcriptional landscape of the mammalian genome.</title>
        <authorList>
            <person name="Carninci P."/>
            <person name="Kasukawa T."/>
            <person name="Katayama S."/>
            <person name="Gough J."/>
            <person name="Frith M.C."/>
            <person name="Maeda N."/>
            <person name="Oyama R."/>
            <person name="Ravasi T."/>
            <person name="Lenhard B."/>
            <person name="Wells C."/>
            <person name="Kodzius R."/>
            <person name="Shimokawa K."/>
            <person name="Bajic V.B."/>
            <person name="Brenner S.E."/>
            <person name="Batalov S."/>
            <person name="Forrest A.R."/>
            <person name="Zavolan M."/>
            <person name="Davis M.J."/>
            <person name="Wilming L.G."/>
            <person name="Aidinis V."/>
            <person name="Allen J.E."/>
            <person name="Ambesi-Impiombato A."/>
            <person name="Apweiler R."/>
            <person name="Aturaliya R.N."/>
            <person name="Bailey T.L."/>
            <person name="Bansal M."/>
            <person name="Baxter L."/>
            <person name="Beisel K.W."/>
            <person name="Bersano T."/>
            <person name="Bono H."/>
            <person name="Chalk A.M."/>
            <person name="Chiu K.P."/>
            <person name="Choudhary V."/>
            <person name="Christoffels A."/>
            <person name="Clutterbuck D.R."/>
            <person name="Crowe M.L."/>
            <person name="Dalla E."/>
            <person name="Dalrymple B.P."/>
            <person name="de Bono B."/>
            <person name="Della Gatta G."/>
            <person name="di Bernardo D."/>
            <person name="Down T."/>
            <person name="Engstrom P."/>
            <person name="Fagiolini M."/>
            <person name="Faulkner G."/>
            <person name="Fletcher C.F."/>
            <person name="Fukushima T."/>
            <person name="Furuno M."/>
            <person name="Futaki S."/>
            <person name="Gariboldi M."/>
            <person name="Georgii-Hemming P."/>
            <person name="Gingeras T.R."/>
            <person name="Gojobori T."/>
            <person name="Green R.E."/>
            <person name="Gustincich S."/>
            <person name="Harbers M."/>
            <person name="Hayashi Y."/>
            <person name="Hensch T.K."/>
            <person name="Hirokawa N."/>
            <person name="Hill D."/>
            <person name="Huminiecki L."/>
            <person name="Iacono M."/>
            <person name="Ikeo K."/>
            <person name="Iwama A."/>
            <person name="Ishikawa T."/>
            <person name="Jakt M."/>
            <person name="Kanapin A."/>
            <person name="Katoh M."/>
            <person name="Kawasawa Y."/>
            <person name="Kelso J."/>
            <person name="Kitamura H."/>
            <person name="Kitano H."/>
            <person name="Kollias G."/>
            <person name="Krishnan S.P."/>
            <person name="Kruger A."/>
            <person name="Kummerfeld S.K."/>
            <person name="Kurochkin I.V."/>
            <person name="Lareau L.F."/>
            <person name="Lazarevic D."/>
            <person name="Lipovich L."/>
            <person name="Liu J."/>
            <person name="Liuni S."/>
            <person name="McWilliam S."/>
            <person name="Madan Babu M."/>
            <person name="Madera M."/>
            <person name="Marchionni L."/>
            <person name="Matsuda H."/>
            <person name="Matsuzawa S."/>
            <person name="Miki H."/>
            <person name="Mignone F."/>
            <person name="Miyake S."/>
            <person name="Morris K."/>
            <person name="Mottagui-Tabar S."/>
            <person name="Mulder N."/>
            <person name="Nakano N."/>
            <person name="Nakauchi H."/>
            <person name="Ng P."/>
            <person name="Nilsson R."/>
            <person name="Nishiguchi S."/>
            <person name="Nishikawa S."/>
            <person name="Nori F."/>
            <person name="Ohara O."/>
            <person name="Okazaki Y."/>
            <person name="Orlando V."/>
            <person name="Pang K.C."/>
            <person name="Pavan W.J."/>
            <person name="Pavesi G."/>
            <person name="Pesole G."/>
            <person name="Petrovsky N."/>
            <person name="Piazza S."/>
            <person name="Reed J."/>
            <person name="Reid J.F."/>
            <person name="Ring B.Z."/>
            <person name="Ringwald M."/>
            <person name="Rost B."/>
            <person name="Ruan Y."/>
            <person name="Salzberg S.L."/>
            <person name="Sandelin A."/>
            <person name="Schneider C."/>
            <person name="Schoenbach C."/>
            <person name="Sekiguchi K."/>
            <person name="Semple C.A."/>
            <person name="Seno S."/>
            <person name="Sessa L."/>
            <person name="Sheng Y."/>
            <person name="Shibata Y."/>
            <person name="Shimada H."/>
            <person name="Shimada K."/>
            <person name="Silva D."/>
            <person name="Sinclair B."/>
            <person name="Sperling S."/>
            <person name="Stupka E."/>
            <person name="Sugiura K."/>
            <person name="Sultana R."/>
            <person name="Takenaka Y."/>
            <person name="Taki K."/>
            <person name="Tammoja K."/>
            <person name="Tan S.L."/>
            <person name="Tang S."/>
            <person name="Taylor M.S."/>
            <person name="Tegner J."/>
            <person name="Teichmann S.A."/>
            <person name="Ueda H.R."/>
            <person name="van Nimwegen E."/>
            <person name="Verardo R."/>
            <person name="Wei C.L."/>
            <person name="Yagi K."/>
            <person name="Yamanishi H."/>
            <person name="Zabarovsky E."/>
            <person name="Zhu S."/>
            <person name="Zimmer A."/>
            <person name="Hide W."/>
            <person name="Bult C."/>
            <person name="Grimmond S.M."/>
            <person name="Teasdale R.D."/>
            <person name="Liu E.T."/>
            <person name="Brusic V."/>
            <person name="Quackenbush J."/>
            <person name="Wahlestedt C."/>
            <person name="Mattick J.S."/>
            <person name="Hume D.A."/>
            <person name="Kai C."/>
            <person name="Sasaki D."/>
            <person name="Tomaru Y."/>
            <person name="Fukuda S."/>
            <person name="Kanamori-Katayama M."/>
            <person name="Suzuki M."/>
            <person name="Aoki J."/>
            <person name="Arakawa T."/>
            <person name="Iida J."/>
            <person name="Imamura K."/>
            <person name="Itoh M."/>
            <person name="Kato T."/>
            <person name="Kawaji H."/>
            <person name="Kawagashira N."/>
            <person name="Kawashima T."/>
            <person name="Kojima M."/>
            <person name="Kondo S."/>
            <person name="Konno H."/>
            <person name="Nakano K."/>
            <person name="Ninomiya N."/>
            <person name="Nishio T."/>
            <person name="Okada M."/>
            <person name="Plessy C."/>
            <person name="Shibata K."/>
            <person name="Shiraki T."/>
            <person name="Suzuki S."/>
            <person name="Tagami M."/>
            <person name="Waki K."/>
            <person name="Watahiki A."/>
            <person name="Okamura-Oho Y."/>
            <person name="Suzuki H."/>
            <person name="Kawai J."/>
            <person name="Hayashizaki Y."/>
        </authorList>
    </citation>
    <scope>NUCLEOTIDE SEQUENCE [LARGE SCALE MRNA]</scope>
    <source>
        <strain>NOD</strain>
        <tissue>Cerebellum</tissue>
        <tissue>Small intestine</tissue>
        <tissue>Thymus</tissue>
    </source>
</reference>
<reference key="6">
    <citation type="journal article" date="2004" name="Genome Res.">
        <title>The status, quality, and expansion of the NIH full-length cDNA project: the Mammalian Gene Collection (MGC).</title>
        <authorList>
            <consortium name="The MGC Project Team"/>
        </authorList>
    </citation>
    <scope>NUCLEOTIDE SEQUENCE [LARGE SCALE MRNA]</scope>
    <source>
        <strain>C57BL/6J</strain>
        <tissue>Brain</tissue>
        <tissue>Mammary gland</tissue>
    </source>
</reference>
<reference key="7">
    <citation type="submission" date="2005-07" db="UniProtKB">
        <authorList>
            <person name="Bienvenut W.V."/>
        </authorList>
    </citation>
    <scope>PROTEIN SEQUENCE OF 2-10 AND 120-135</scope>
    <scope>CLEAVAGE OF INITIATOR METHIONINE</scope>
    <scope>ACETYLATION AT ALA-2</scope>
    <scope>IDENTIFICATION BY MASS SPECTROMETRY</scope>
    <source>
        <strain>C57BL/6J</strain>
        <tissue>Liver</tissue>
    </source>
</reference>
<reference key="8">
    <citation type="submission" date="2007-07" db="UniProtKB">
        <authorList>
            <person name="Lubec G."/>
            <person name="Kang S.U."/>
            <person name="Klug S."/>
            <person name="Yang J.W."/>
            <person name="Zigmond M."/>
        </authorList>
    </citation>
    <scope>PROTEIN SEQUENCE OF 11-26; 92-109; 120-127 AND 140-150</scope>
    <scope>IDENTIFICATION BY MASS SPECTROMETRY</scope>
    <source>
        <strain>C57BL/6J</strain>
        <tissue>Brain</tissue>
        <tissue>Hippocampus</tissue>
    </source>
</reference>
<reference key="9">
    <citation type="journal article" date="2007" name="J. Mol. Biol.">
        <title>Mammalian TIMELESS and Tipin are evolutionarily conserved replication fork-associated factors.</title>
        <authorList>
            <person name="Gotter A.L."/>
            <person name="Suppa C."/>
            <person name="Emanuel B.S."/>
        </authorList>
    </citation>
    <scope>INTERACTION WITH TIPIN</scope>
</reference>
<reference key="10">
    <citation type="journal article" date="2010" name="Cell">
        <title>A tissue-specific atlas of mouse protein phosphorylation and expression.</title>
        <authorList>
            <person name="Huttlin E.L."/>
            <person name="Jedrychowski M.P."/>
            <person name="Elias J.E."/>
            <person name="Goswami T."/>
            <person name="Rad R."/>
            <person name="Beausoleil S.A."/>
            <person name="Villen J."/>
            <person name="Haas W."/>
            <person name="Sowa M.E."/>
            <person name="Gygi S.P."/>
        </authorList>
    </citation>
    <scope>PHOSPHORYLATION [LARGE SCALE ANALYSIS] AT SER-11</scope>
    <scope>IDENTIFICATION BY MASS SPECTROMETRY [LARGE SCALE ANALYSIS]</scope>
    <source>
        <tissue>Brain</tissue>
        <tissue>Brown adipose tissue</tissue>
        <tissue>Heart</tissue>
        <tissue>Kidney</tissue>
        <tissue>Liver</tissue>
        <tissue>Lung</tissue>
        <tissue>Pancreas</tissue>
        <tissue>Spleen</tissue>
        <tissue>Testis</tissue>
    </source>
</reference>
<name>PRDX2_MOUSE</name>
<feature type="initiator methionine" description="Removed" evidence="5">
    <location>
        <position position="1"/>
    </location>
</feature>
<feature type="chain" id="PRO_0000135081" description="Peroxiredoxin-2">
    <location>
        <begin position="2"/>
        <end position="198"/>
    </location>
</feature>
<feature type="domain" description="Thioredoxin" evidence="3">
    <location>
        <begin position="6"/>
        <end position="164"/>
    </location>
</feature>
<feature type="active site" description="Cysteine sulfenic acid (-SOH) intermediate" evidence="1">
    <location>
        <position position="51"/>
    </location>
</feature>
<feature type="modified residue" description="N-acetylalanine" evidence="5">
    <location>
        <position position="2"/>
    </location>
</feature>
<feature type="modified residue" description="Phosphoserine" evidence="7">
    <location>
        <position position="11"/>
    </location>
</feature>
<feature type="modified residue" description="Phosphoserine" evidence="1">
    <location>
        <position position="112"/>
    </location>
</feature>
<feature type="modified residue" description="Phosphothreonine" evidence="1">
    <location>
        <position position="182"/>
    </location>
</feature>
<feature type="modified residue" description="N6-acetyllysine" evidence="1">
    <location>
        <position position="196"/>
    </location>
</feature>
<feature type="disulfide bond" description="Interchain (with C-172); in linked form" evidence="1">
    <location>
        <position position="51"/>
    </location>
</feature>
<feature type="disulfide bond" description="Interchain (with C-51); in linked form" evidence="1">
    <location>
        <position position="172"/>
    </location>
</feature>
<feature type="sequence conflict" description="In Ref. 5; BAB27093." evidence="6" ref="5">
    <original>V</original>
    <variation>M</variation>
    <location>
        <position position="38"/>
    </location>
</feature>
<feature type="sequence conflict" description="In Ref. 5; BAB23893." evidence="6" ref="5">
    <original>V</original>
    <variation>D</variation>
    <location>
        <position position="39"/>
    </location>
</feature>
<feature type="sequence conflict" description="In Ref. 5; BAB23893." evidence="6" ref="5">
    <original>G</original>
    <variation>R</variation>
    <location>
        <position position="69"/>
    </location>
</feature>
<feature type="sequence conflict" description="In Ref. 3; AAA69475." evidence="6" ref="3">
    <original>G</original>
    <variation>A</variation>
    <location>
        <position position="97"/>
    </location>
</feature>
<feature type="sequence conflict" description="In Ref. 5; BAB23893." evidence="6" ref="5">
    <original>Q</original>
    <variation>H</variation>
    <location>
        <position position="113"/>
    </location>
</feature>
<feature type="sequence conflict" description="In Ref. 5; BAB23893." evidence="6" ref="5">
    <original>I</original>
    <variation>V</variation>
    <location>
        <position position="124"/>
    </location>
</feature>
<feature type="sequence conflict" description="In Ref. 5; BAB23893." evidence="6" ref="5">
    <original>K</original>
    <variation>S</variation>
    <location>
        <position position="135"/>
    </location>
</feature>
<feature type="sequence conflict" description="In Ref. 3 and 4." evidence="6" ref="3 4">
    <original>T</original>
    <variation>N</variation>
    <location>
        <position position="182"/>
    </location>
</feature>
<keyword id="KW-0007">Acetylation</keyword>
<keyword id="KW-0049">Antioxidant</keyword>
<keyword id="KW-0963">Cytoplasm</keyword>
<keyword id="KW-0903">Direct protein sequencing</keyword>
<keyword id="KW-1015">Disulfide bond</keyword>
<keyword id="KW-0560">Oxidoreductase</keyword>
<keyword id="KW-0575">Peroxidase</keyword>
<keyword id="KW-0597">Phosphoprotein</keyword>
<keyword id="KW-0676">Redox-active center</keyword>
<keyword id="KW-1185">Reference proteome</keyword>
<comment type="function">
    <text evidence="1">Thiol-specific peroxidase that catalyzes the reduction of hydrogen peroxide and organic hydroperoxides to water and alcohols, respectively. Plays a role in cell protection against oxidative stress by detoxifying peroxides and as sensor of hydrogen peroxide-mediated signaling events. Might participate in the signaling cascades of growth factors and tumor necrosis factor-alpha by regulating the intracellular concentrations of H(2)O(2).</text>
</comment>
<comment type="catalytic activity">
    <reaction evidence="1">
        <text>a hydroperoxide + [thioredoxin]-dithiol = an alcohol + [thioredoxin]-disulfide + H2O</text>
        <dbReference type="Rhea" id="RHEA:62620"/>
        <dbReference type="Rhea" id="RHEA-COMP:10698"/>
        <dbReference type="Rhea" id="RHEA-COMP:10700"/>
        <dbReference type="ChEBI" id="CHEBI:15377"/>
        <dbReference type="ChEBI" id="CHEBI:29950"/>
        <dbReference type="ChEBI" id="CHEBI:30879"/>
        <dbReference type="ChEBI" id="CHEBI:35924"/>
        <dbReference type="ChEBI" id="CHEBI:50058"/>
        <dbReference type="EC" id="1.11.1.24"/>
    </reaction>
</comment>
<comment type="subunit">
    <text evidence="1 4">Homodimer; disulfide-linked, upon oxidation. 5 homodimers assemble to form a ring-like decamer (By similarity). Interacts with TIPIN (PubMed:17141802).</text>
</comment>
<comment type="subcellular location">
    <subcellularLocation>
        <location evidence="1">Cytoplasm</location>
    </subcellularLocation>
</comment>
<comment type="tissue specificity">
    <text>Widely expressed with highest levels in bone marrow. High levels also found in heart, brain, kidney and skeletal muscle. Lower levels in liver, lung and thymus.</text>
</comment>
<comment type="PTM">
    <text evidence="1 2">The enzyme can be inactivated by further oxidation of the cysteine sulfenic acid (C(P)-SOH) to sulphinic acid (C(P)-SO2H) instead of its condensation to a disulfide bond. It can be reactivated by forming a transient disulfide bond with sulfiredoxin SRXN1, which reduces the cysteine sulfinic acid in an ATP- and Mg-dependent manner.</text>
</comment>
<comment type="PTM">
    <text evidence="1">Acetylation increases resistance to transition to high molecular-mass complexes. Deacetylated by HDAC6 which decreases reducing activity.</text>
</comment>
<comment type="miscellaneous">
    <text evidence="1">The active site is a conserved redox-active cysteine residue, the peroxidatic cysteine (C(P)), which makes the nucleophilic attack on the peroxide substrate. The peroxide oxidizes the C(P)-SH to cysteine sulfenic acid (C(P)-SOH), which then reacts with another cysteine residue, the resolving cysteine (C(R)), to form a disulfide bridge. The disulfide is subsequently reduced by an appropriate electron donor to complete the catalytic cycle. In this typical 2-Cys peroxiredoxin, C(R) is provided by the other dimeric subunit to form an intersubunit disulfide. The disulfide is subsequently reduced by thioredoxin.</text>
</comment>
<comment type="similarity">
    <text evidence="6">Belongs to the peroxiredoxin family. AhpC/Prx1 subfamily.</text>
</comment>
<protein>
    <recommendedName>
        <fullName>Peroxiredoxin-2</fullName>
        <ecNumber evidence="1">1.11.1.24</ecNumber>
    </recommendedName>
    <alternativeName>
        <fullName>Thiol-specific antioxidant protein</fullName>
        <shortName>TSA</shortName>
    </alternativeName>
    <alternativeName>
        <fullName>Thioredoxin peroxidase 1</fullName>
    </alternativeName>
    <alternativeName>
        <fullName>Thioredoxin-dependent peroxide reductase 1</fullName>
    </alternativeName>
    <alternativeName>
        <fullName evidence="6">Thioredoxin-dependent peroxiredoxin 2</fullName>
    </alternativeName>
</protein>
<gene>
    <name type="primary">Prdx2</name>
    <name type="synonym">Tdpx1</name>
    <name type="synonym">Tpx</name>
</gene>
<organism>
    <name type="scientific">Mus musculus</name>
    <name type="common">Mouse</name>
    <dbReference type="NCBI Taxonomy" id="10090"/>
    <lineage>
        <taxon>Eukaryota</taxon>
        <taxon>Metazoa</taxon>
        <taxon>Chordata</taxon>
        <taxon>Craniata</taxon>
        <taxon>Vertebrata</taxon>
        <taxon>Euteleostomi</taxon>
        <taxon>Mammalia</taxon>
        <taxon>Eutheria</taxon>
        <taxon>Euarchontoglires</taxon>
        <taxon>Glires</taxon>
        <taxon>Rodentia</taxon>
        <taxon>Myomorpha</taxon>
        <taxon>Muroidea</taxon>
        <taxon>Muridae</taxon>
        <taxon>Murinae</taxon>
        <taxon>Mus</taxon>
        <taxon>Mus</taxon>
    </lineage>
</organism>
<evidence type="ECO:0000250" key="1">
    <source>
        <dbReference type="UniProtKB" id="P32119"/>
    </source>
</evidence>
<evidence type="ECO:0000250" key="2">
    <source>
        <dbReference type="UniProtKB" id="Q06830"/>
    </source>
</evidence>
<evidence type="ECO:0000255" key="3">
    <source>
        <dbReference type="PROSITE-ProRule" id="PRU00691"/>
    </source>
</evidence>
<evidence type="ECO:0000269" key="4">
    <source>
    </source>
</evidence>
<evidence type="ECO:0000269" key="5">
    <source ref="7"/>
</evidence>
<evidence type="ECO:0000305" key="6"/>
<evidence type="ECO:0007744" key="7">
    <source>
    </source>
</evidence>
<accession>Q61171</accession>
<accession>O88376</accession>
<accession>Q60796</accession>
<accession>Q9CWJ4</accession>
<accession>Q9DB49</accession>
<sequence length="198" mass="21779">MASGNAQIGKSAPDFTATAVVDGAFKEIKLSDYRGKYVVLFFYPLDFTFVCPTEIIAFSDHAEDFRKLGCEVLGVSVDSQFTHLAWINTPRKEGGLGPLNIPLLADVTKSLSQNYGVLKNDEGIAYRGLFIIDAKGVLRQITVNDLPVGRSVDEALRLVQAFQYTDEHGEVCPAGWKPGSDTIKPNVDDSKEYFSKHN</sequence>
<proteinExistence type="evidence at protein level"/>
<dbReference type="EC" id="1.11.1.24" evidence="1"/>
<dbReference type="EMBL" id="U51679">
    <property type="protein sequence ID" value="AAB01941.1"/>
    <property type="molecule type" value="mRNA"/>
</dbReference>
<dbReference type="EMBL" id="X82067">
    <property type="protein sequence ID" value="CAA57566.1"/>
    <property type="molecule type" value="mRNA"/>
</dbReference>
<dbReference type="EMBL" id="U20611">
    <property type="protein sequence ID" value="AAA69475.1"/>
    <property type="molecule type" value="mRNA"/>
</dbReference>
<dbReference type="EMBL" id="AF032722">
    <property type="protein sequence ID" value="AAC35744.1"/>
    <property type="molecule type" value="Genomic_DNA"/>
</dbReference>
<dbReference type="EMBL" id="AF032718">
    <property type="protein sequence ID" value="AAC35744.1"/>
    <property type="status" value="JOINED"/>
    <property type="molecule type" value="Genomic_DNA"/>
</dbReference>
<dbReference type="EMBL" id="AF032719">
    <property type="protein sequence ID" value="AAC35744.1"/>
    <property type="status" value="JOINED"/>
    <property type="molecule type" value="Genomic_DNA"/>
</dbReference>
<dbReference type="EMBL" id="AF032720">
    <property type="protein sequence ID" value="AAC35744.1"/>
    <property type="status" value="JOINED"/>
    <property type="molecule type" value="Genomic_DNA"/>
</dbReference>
<dbReference type="EMBL" id="AF032721">
    <property type="protein sequence ID" value="AAC35744.1"/>
    <property type="status" value="JOINED"/>
    <property type="molecule type" value="Genomic_DNA"/>
</dbReference>
<dbReference type="EMBL" id="AK005225">
    <property type="protein sequence ID" value="BAB23893.1"/>
    <property type="molecule type" value="mRNA"/>
</dbReference>
<dbReference type="EMBL" id="AK008433">
    <property type="protein sequence ID" value="BAB25666.1"/>
    <property type="molecule type" value="mRNA"/>
</dbReference>
<dbReference type="EMBL" id="AK010653">
    <property type="protein sequence ID" value="BAB27093.1"/>
    <property type="molecule type" value="mRNA"/>
</dbReference>
<dbReference type="EMBL" id="AK088280">
    <property type="protein sequence ID" value="BAC40255.1"/>
    <property type="molecule type" value="mRNA"/>
</dbReference>
<dbReference type="EMBL" id="BC002034">
    <property type="protein sequence ID" value="AAH02034.1"/>
    <property type="molecule type" value="mRNA"/>
</dbReference>
<dbReference type="EMBL" id="BC081454">
    <property type="protein sequence ID" value="AAH81454.1"/>
    <property type="molecule type" value="mRNA"/>
</dbReference>
<dbReference type="CCDS" id="CCDS40416.1"/>
<dbReference type="RefSeq" id="NP_001304314.1">
    <property type="nucleotide sequence ID" value="NM_001317385.1"/>
</dbReference>
<dbReference type="RefSeq" id="NP_035693.3">
    <property type="nucleotide sequence ID" value="NM_011563.6"/>
</dbReference>
<dbReference type="SMR" id="Q61171"/>
<dbReference type="BioGRID" id="204094">
    <property type="interactions" value="39"/>
</dbReference>
<dbReference type="FunCoup" id="Q61171">
    <property type="interactions" value="1464"/>
</dbReference>
<dbReference type="IntAct" id="Q61171">
    <property type="interactions" value="13"/>
</dbReference>
<dbReference type="MINT" id="Q61171"/>
<dbReference type="STRING" id="10090.ENSMUSP00000105356"/>
<dbReference type="MoonProt" id="Q61171"/>
<dbReference type="PeroxiBase" id="4474">
    <property type="entry name" value="Mm2CysPrx02"/>
</dbReference>
<dbReference type="GlyGen" id="Q61171">
    <property type="glycosylation" value="1 site, 1 O-linked glycan (1 site)"/>
</dbReference>
<dbReference type="iPTMnet" id="Q61171"/>
<dbReference type="PhosphoSitePlus" id="Q61171"/>
<dbReference type="SwissPalm" id="Q61171"/>
<dbReference type="REPRODUCTION-2DPAGE" id="Q61171"/>
<dbReference type="CPTAC" id="non-CPTAC-3401"/>
<dbReference type="jPOST" id="Q61171"/>
<dbReference type="PaxDb" id="10090-ENSMUSP00000005292"/>
<dbReference type="PeptideAtlas" id="Q61171"/>
<dbReference type="ProteomicsDB" id="291866"/>
<dbReference type="Pumba" id="Q61171"/>
<dbReference type="TopDownProteomics" id="Q61171"/>
<dbReference type="Antibodypedia" id="3283">
    <property type="antibodies" value="575 antibodies from 45 providers"/>
</dbReference>
<dbReference type="DNASU" id="21672"/>
<dbReference type="Ensembl" id="ENSMUST00000005292.15">
    <property type="protein sequence ID" value="ENSMUSP00000005292.9"/>
    <property type="gene ID" value="ENSMUSG00000005161.16"/>
</dbReference>
<dbReference type="Ensembl" id="ENSMUST00000109733.8">
    <property type="protein sequence ID" value="ENSMUSP00000105355.2"/>
    <property type="gene ID" value="ENSMUSG00000005161.16"/>
</dbReference>
<dbReference type="Ensembl" id="ENSMUST00000109734.8">
    <property type="protein sequence ID" value="ENSMUSP00000105356.2"/>
    <property type="gene ID" value="ENSMUSG00000005161.16"/>
</dbReference>
<dbReference type="Ensembl" id="ENSMUST00000164807.2">
    <property type="protein sequence ID" value="ENSMUSP00000126451.2"/>
    <property type="gene ID" value="ENSMUSG00000005161.16"/>
</dbReference>
<dbReference type="GeneID" id="21672"/>
<dbReference type="KEGG" id="mmu:21672"/>
<dbReference type="UCSC" id="uc009mom.1">
    <property type="organism name" value="mouse"/>
</dbReference>
<dbReference type="AGR" id="MGI:109486"/>
<dbReference type="CTD" id="7001"/>
<dbReference type="MGI" id="MGI:109486">
    <property type="gene designation" value="Prdx2"/>
</dbReference>
<dbReference type="VEuPathDB" id="HostDB:ENSMUSG00000005161"/>
<dbReference type="eggNOG" id="KOG0852">
    <property type="taxonomic scope" value="Eukaryota"/>
</dbReference>
<dbReference type="GeneTree" id="ENSGT00940000155828"/>
<dbReference type="HOGENOM" id="CLU_042529_21_0_1"/>
<dbReference type="InParanoid" id="Q61171"/>
<dbReference type="OMA" id="VCTKELC"/>
<dbReference type="OrthoDB" id="185659at2759"/>
<dbReference type="PhylomeDB" id="Q61171"/>
<dbReference type="TreeFam" id="TF105181"/>
<dbReference type="Reactome" id="R-MMU-3299685">
    <property type="pathway name" value="Detoxification of Reactive Oxygen Species"/>
</dbReference>
<dbReference type="Reactome" id="R-MMU-5628897">
    <property type="pathway name" value="TP53 Regulates Metabolic Genes"/>
</dbReference>
<dbReference type="BioGRID-ORCS" id="21672">
    <property type="hits" value="3 hits in 76 CRISPR screens"/>
</dbReference>
<dbReference type="CD-CODE" id="CE726F99">
    <property type="entry name" value="Postsynaptic density"/>
</dbReference>
<dbReference type="ChiTaRS" id="Prdx2">
    <property type="organism name" value="mouse"/>
</dbReference>
<dbReference type="PRO" id="PR:Q61171"/>
<dbReference type="Proteomes" id="UP000000589">
    <property type="component" value="Chromosome 8"/>
</dbReference>
<dbReference type="RNAct" id="Q61171">
    <property type="molecule type" value="protein"/>
</dbReference>
<dbReference type="Bgee" id="ENSMUSG00000005161">
    <property type="expression patterns" value="Expressed in cortical plate and 246 other cell types or tissues"/>
</dbReference>
<dbReference type="ExpressionAtlas" id="Q61171">
    <property type="expression patterns" value="baseline and differential"/>
</dbReference>
<dbReference type="GO" id="GO:0005829">
    <property type="term" value="C:cytosol"/>
    <property type="evidence" value="ECO:0000304"/>
    <property type="project" value="Reactome"/>
</dbReference>
<dbReference type="GO" id="GO:0005739">
    <property type="term" value="C:mitochondrion"/>
    <property type="evidence" value="ECO:0007005"/>
    <property type="project" value="MGI"/>
</dbReference>
<dbReference type="GO" id="GO:0043209">
    <property type="term" value="C:myelin sheath"/>
    <property type="evidence" value="ECO:0007005"/>
    <property type="project" value="UniProtKB"/>
</dbReference>
<dbReference type="GO" id="GO:0004601">
    <property type="term" value="F:peroxidase activity"/>
    <property type="evidence" value="ECO:0000304"/>
    <property type="project" value="MGI"/>
</dbReference>
<dbReference type="GO" id="GO:0008430">
    <property type="term" value="F:selenium binding"/>
    <property type="evidence" value="ECO:0000304"/>
    <property type="project" value="MGI"/>
</dbReference>
<dbReference type="GO" id="GO:0008379">
    <property type="term" value="F:thioredoxin peroxidase activity"/>
    <property type="evidence" value="ECO:0000250"/>
    <property type="project" value="MGI"/>
</dbReference>
<dbReference type="GO" id="GO:0002357">
    <property type="term" value="P:defense response to tumor cell"/>
    <property type="evidence" value="ECO:0007669"/>
    <property type="project" value="Ensembl"/>
</dbReference>
<dbReference type="GO" id="GO:0097191">
    <property type="term" value="P:extrinsic apoptotic signaling pathway"/>
    <property type="evidence" value="ECO:0000315"/>
    <property type="project" value="MGI"/>
</dbReference>
<dbReference type="GO" id="GO:0042744">
    <property type="term" value="P:hydrogen peroxide catabolic process"/>
    <property type="evidence" value="ECO:0000315"/>
    <property type="project" value="MGI"/>
</dbReference>
<dbReference type="GO" id="GO:0042743">
    <property type="term" value="P:hydrogen peroxide metabolic process"/>
    <property type="evidence" value="ECO:0000315"/>
    <property type="project" value="MGI"/>
</dbReference>
<dbReference type="GO" id="GO:2001237">
    <property type="term" value="P:negative regulation of extrinsic apoptotic signaling pathway"/>
    <property type="evidence" value="ECO:0000315"/>
    <property type="project" value="MGI"/>
</dbReference>
<dbReference type="GO" id="GO:2001240">
    <property type="term" value="P:negative regulation of extrinsic apoptotic signaling pathway in absence of ligand"/>
    <property type="evidence" value="ECO:0000314"/>
    <property type="project" value="MGI"/>
</dbReference>
<dbReference type="GO" id="GO:0031665">
    <property type="term" value="P:negative regulation of lipopolysaccharide-mediated signaling pathway"/>
    <property type="evidence" value="ECO:0000315"/>
    <property type="project" value="MGI"/>
</dbReference>
<dbReference type="GO" id="GO:0045581">
    <property type="term" value="P:negative regulation of T cell differentiation"/>
    <property type="evidence" value="ECO:0000315"/>
    <property type="project" value="MGI"/>
</dbReference>
<dbReference type="GO" id="GO:0030194">
    <property type="term" value="P:positive regulation of blood coagulation"/>
    <property type="evidence" value="ECO:0000315"/>
    <property type="project" value="BHF-UCL"/>
</dbReference>
<dbReference type="GO" id="GO:0043410">
    <property type="term" value="P:positive regulation of MAPK cascade"/>
    <property type="evidence" value="ECO:0000315"/>
    <property type="project" value="MGI"/>
</dbReference>
<dbReference type="GO" id="GO:0010310">
    <property type="term" value="P:regulation of hydrogen peroxide metabolic process"/>
    <property type="evidence" value="ECO:0000315"/>
    <property type="project" value="MGI"/>
</dbReference>
<dbReference type="GO" id="GO:0019430">
    <property type="term" value="P:removal of superoxide radicals"/>
    <property type="evidence" value="ECO:0000315"/>
    <property type="project" value="BHF-UCL"/>
</dbReference>
<dbReference type="GO" id="GO:0002536">
    <property type="term" value="P:respiratory burst involved in inflammatory response"/>
    <property type="evidence" value="ECO:0000315"/>
    <property type="project" value="MGI"/>
</dbReference>
<dbReference type="GO" id="GO:0032496">
    <property type="term" value="P:response to lipopolysaccharide"/>
    <property type="evidence" value="ECO:0000315"/>
    <property type="project" value="MGI"/>
</dbReference>
<dbReference type="GO" id="GO:0006979">
    <property type="term" value="P:response to oxidative stress"/>
    <property type="evidence" value="ECO:0000304"/>
    <property type="project" value="MGI"/>
</dbReference>
<dbReference type="GO" id="GO:0043029">
    <property type="term" value="P:T cell homeostasis"/>
    <property type="evidence" value="ECO:0000315"/>
    <property type="project" value="MGI"/>
</dbReference>
<dbReference type="GO" id="GO:0042098">
    <property type="term" value="P:T cell proliferation"/>
    <property type="evidence" value="ECO:0000315"/>
    <property type="project" value="MGI"/>
</dbReference>
<dbReference type="GO" id="GO:0048538">
    <property type="term" value="P:thymus development"/>
    <property type="evidence" value="ECO:0000315"/>
    <property type="project" value="MGI"/>
</dbReference>
<dbReference type="CDD" id="cd03015">
    <property type="entry name" value="PRX_Typ2cys"/>
    <property type="match status" value="1"/>
</dbReference>
<dbReference type="FunFam" id="3.40.30.10:FF:000003">
    <property type="entry name" value="Peroxiredoxin 1"/>
    <property type="match status" value="1"/>
</dbReference>
<dbReference type="Gene3D" id="3.40.30.10">
    <property type="entry name" value="Glutaredoxin"/>
    <property type="match status" value="1"/>
</dbReference>
<dbReference type="InterPro" id="IPR000866">
    <property type="entry name" value="AhpC/TSA"/>
</dbReference>
<dbReference type="InterPro" id="IPR050217">
    <property type="entry name" value="Peroxiredoxin"/>
</dbReference>
<dbReference type="InterPro" id="IPR024706">
    <property type="entry name" value="Peroxiredoxin_AhpC-typ"/>
</dbReference>
<dbReference type="InterPro" id="IPR019479">
    <property type="entry name" value="Peroxiredoxin_C"/>
</dbReference>
<dbReference type="InterPro" id="IPR036249">
    <property type="entry name" value="Thioredoxin-like_sf"/>
</dbReference>
<dbReference type="InterPro" id="IPR013766">
    <property type="entry name" value="Thioredoxin_domain"/>
</dbReference>
<dbReference type="PANTHER" id="PTHR10681:SF161">
    <property type="entry name" value="PEROXIREDOXIN-2"/>
    <property type="match status" value="1"/>
</dbReference>
<dbReference type="PANTHER" id="PTHR10681">
    <property type="entry name" value="THIOREDOXIN PEROXIDASE"/>
    <property type="match status" value="1"/>
</dbReference>
<dbReference type="Pfam" id="PF10417">
    <property type="entry name" value="1-cysPrx_C"/>
    <property type="match status" value="1"/>
</dbReference>
<dbReference type="Pfam" id="PF00578">
    <property type="entry name" value="AhpC-TSA"/>
    <property type="match status" value="1"/>
</dbReference>
<dbReference type="PIRSF" id="PIRSF000239">
    <property type="entry name" value="AHPC"/>
    <property type="match status" value="1"/>
</dbReference>
<dbReference type="SUPFAM" id="SSF52833">
    <property type="entry name" value="Thioredoxin-like"/>
    <property type="match status" value="1"/>
</dbReference>
<dbReference type="PROSITE" id="PS51352">
    <property type="entry name" value="THIOREDOXIN_2"/>
    <property type="match status" value="1"/>
</dbReference>